<protein>
    <recommendedName>
        <fullName evidence="1">Large ribosomal subunit protein bL17</fullName>
    </recommendedName>
    <alternativeName>
        <fullName evidence="2">50S ribosomal protein L17</fullName>
    </alternativeName>
</protein>
<name>RL17_PHYMT</name>
<reference key="1">
    <citation type="journal article" date="2008" name="BMC Genomics">
        <title>The linear chromosome of the plant-pathogenic mycoplasma 'Candidatus Phytoplasma mali'.</title>
        <authorList>
            <person name="Kube M."/>
            <person name="Schneider B."/>
            <person name="Kuhl H."/>
            <person name="Dandekar T."/>
            <person name="Heitmann K."/>
            <person name="Migdoll A.M."/>
            <person name="Reinhardt R."/>
            <person name="Seemueller E."/>
        </authorList>
    </citation>
    <scope>NUCLEOTIDE SEQUENCE [LARGE SCALE GENOMIC DNA]</scope>
    <source>
        <strain>AT</strain>
    </source>
</reference>
<gene>
    <name evidence="1" type="primary">rplQ</name>
    <name type="ordered locus">ATP_00368</name>
</gene>
<comment type="subunit">
    <text evidence="1">Part of the 50S ribosomal subunit. Contacts protein L32.</text>
</comment>
<comment type="similarity">
    <text evidence="1">Belongs to the bacterial ribosomal protein bL17 family.</text>
</comment>
<sequence length="118" mass="13750">MAYSKLRRNTSQRKSLLRSLVSDLIIKEKIITTESKAKELQKKVEKVITLAKKKSLHHRRQVFKKLFDENINKEQTVTQKLFTTTAEKYMKRNGGYTRIIKTVPRRGDAAPMAIITFV</sequence>
<accession>B3R018</accession>
<evidence type="ECO:0000255" key="1">
    <source>
        <dbReference type="HAMAP-Rule" id="MF_01368"/>
    </source>
</evidence>
<evidence type="ECO:0000305" key="2"/>
<proteinExistence type="inferred from homology"/>
<feature type="chain" id="PRO_1000184037" description="Large ribosomal subunit protein bL17">
    <location>
        <begin position="1"/>
        <end position="118"/>
    </location>
</feature>
<keyword id="KW-1185">Reference proteome</keyword>
<keyword id="KW-0687">Ribonucleoprotein</keyword>
<keyword id="KW-0689">Ribosomal protein</keyword>
<organism>
    <name type="scientific">Phytoplasma mali (strain AT)</name>
    <dbReference type="NCBI Taxonomy" id="482235"/>
    <lineage>
        <taxon>Bacteria</taxon>
        <taxon>Bacillati</taxon>
        <taxon>Mycoplasmatota</taxon>
        <taxon>Mollicutes</taxon>
        <taxon>Acholeplasmatales</taxon>
        <taxon>Acholeplasmataceae</taxon>
        <taxon>Candidatus Phytoplasma</taxon>
        <taxon>16SrX (Apple proliferation group)</taxon>
    </lineage>
</organism>
<dbReference type="EMBL" id="CU469464">
    <property type="protein sequence ID" value="CAP18555.1"/>
    <property type="molecule type" value="Genomic_DNA"/>
</dbReference>
<dbReference type="SMR" id="B3R018"/>
<dbReference type="STRING" id="37692.ATP_00368"/>
<dbReference type="KEGG" id="pml:ATP_00368"/>
<dbReference type="eggNOG" id="COG0203">
    <property type="taxonomic scope" value="Bacteria"/>
</dbReference>
<dbReference type="HOGENOM" id="CLU_074407_2_2_14"/>
<dbReference type="Proteomes" id="UP000002020">
    <property type="component" value="Chromosome"/>
</dbReference>
<dbReference type="GO" id="GO:0022625">
    <property type="term" value="C:cytosolic large ribosomal subunit"/>
    <property type="evidence" value="ECO:0007669"/>
    <property type="project" value="TreeGrafter"/>
</dbReference>
<dbReference type="GO" id="GO:0003735">
    <property type="term" value="F:structural constituent of ribosome"/>
    <property type="evidence" value="ECO:0007669"/>
    <property type="project" value="InterPro"/>
</dbReference>
<dbReference type="GO" id="GO:0006412">
    <property type="term" value="P:translation"/>
    <property type="evidence" value="ECO:0007669"/>
    <property type="project" value="UniProtKB-UniRule"/>
</dbReference>
<dbReference type="Gene3D" id="3.90.1030.10">
    <property type="entry name" value="Ribosomal protein L17"/>
    <property type="match status" value="1"/>
</dbReference>
<dbReference type="HAMAP" id="MF_01368">
    <property type="entry name" value="Ribosomal_bL17"/>
    <property type="match status" value="1"/>
</dbReference>
<dbReference type="InterPro" id="IPR000456">
    <property type="entry name" value="Ribosomal_bL17"/>
</dbReference>
<dbReference type="InterPro" id="IPR047859">
    <property type="entry name" value="Ribosomal_bL17_CS"/>
</dbReference>
<dbReference type="InterPro" id="IPR036373">
    <property type="entry name" value="Ribosomal_bL17_sf"/>
</dbReference>
<dbReference type="NCBIfam" id="TIGR00059">
    <property type="entry name" value="L17"/>
    <property type="match status" value="1"/>
</dbReference>
<dbReference type="PANTHER" id="PTHR14413:SF16">
    <property type="entry name" value="LARGE RIBOSOMAL SUBUNIT PROTEIN BL17M"/>
    <property type="match status" value="1"/>
</dbReference>
<dbReference type="PANTHER" id="PTHR14413">
    <property type="entry name" value="RIBOSOMAL PROTEIN L17"/>
    <property type="match status" value="1"/>
</dbReference>
<dbReference type="Pfam" id="PF01196">
    <property type="entry name" value="Ribosomal_L17"/>
    <property type="match status" value="1"/>
</dbReference>
<dbReference type="SUPFAM" id="SSF64263">
    <property type="entry name" value="Prokaryotic ribosomal protein L17"/>
    <property type="match status" value="1"/>
</dbReference>
<dbReference type="PROSITE" id="PS01167">
    <property type="entry name" value="RIBOSOMAL_L17"/>
    <property type="match status" value="1"/>
</dbReference>